<feature type="chain" id="PRO_0000247857" description="Peroxynitrite isomerase THAP4">
    <location>
        <begin position="1"/>
        <end position="584"/>
    </location>
</feature>
<feature type="zinc finger region" description="THAP-type" evidence="3">
    <location>
        <begin position="1"/>
        <end position="85"/>
    </location>
</feature>
<feature type="region of interest" description="Disordered" evidence="4">
    <location>
        <begin position="84"/>
        <end position="330"/>
    </location>
</feature>
<feature type="region of interest" description="Nitrobindin" evidence="2">
    <location>
        <begin position="422"/>
        <end position="584"/>
    </location>
</feature>
<feature type="short sequence motif" description="HCFC1-binding motif (HBM)" evidence="1">
    <location>
        <begin position="236"/>
        <end position="239"/>
    </location>
</feature>
<feature type="compositionally biased region" description="Basic residues" evidence="4">
    <location>
        <begin position="89"/>
        <end position="104"/>
    </location>
</feature>
<feature type="compositionally biased region" description="Low complexity" evidence="4">
    <location>
        <begin position="122"/>
        <end position="138"/>
    </location>
</feature>
<feature type="compositionally biased region" description="Basic and acidic residues" evidence="4">
    <location>
        <begin position="158"/>
        <end position="178"/>
    </location>
</feature>
<feature type="compositionally biased region" description="Low complexity" evidence="4">
    <location>
        <begin position="190"/>
        <end position="208"/>
    </location>
</feature>
<feature type="compositionally biased region" description="Basic and acidic residues" evidence="4">
    <location>
        <begin position="248"/>
        <end position="267"/>
    </location>
</feature>
<feature type="binding site" evidence="2">
    <location>
        <position position="451"/>
    </location>
    <ligand>
        <name>heme b</name>
        <dbReference type="ChEBI" id="CHEBI:60344"/>
    </ligand>
</feature>
<feature type="binding site" description="axial binding residue" evidence="2">
    <location>
        <position position="574"/>
    </location>
    <ligand>
        <name>heme b</name>
        <dbReference type="ChEBI" id="CHEBI:60344"/>
    </ligand>
    <ligandPart>
        <name>Fe</name>
        <dbReference type="ChEBI" id="CHEBI:18248"/>
    </ligandPart>
</feature>
<feature type="modified residue" description="Phosphoserine" evidence="2">
    <location>
        <position position="240"/>
    </location>
</feature>
<organism>
    <name type="scientific">Bos taurus</name>
    <name type="common">Bovine</name>
    <dbReference type="NCBI Taxonomy" id="9913"/>
    <lineage>
        <taxon>Eukaryota</taxon>
        <taxon>Metazoa</taxon>
        <taxon>Chordata</taxon>
        <taxon>Craniata</taxon>
        <taxon>Vertebrata</taxon>
        <taxon>Euteleostomi</taxon>
        <taxon>Mammalia</taxon>
        <taxon>Eutheria</taxon>
        <taxon>Laurasiatheria</taxon>
        <taxon>Artiodactyla</taxon>
        <taxon>Ruminantia</taxon>
        <taxon>Pecora</taxon>
        <taxon>Bovidae</taxon>
        <taxon>Bovinae</taxon>
        <taxon>Bos</taxon>
    </lineage>
</organism>
<evidence type="ECO:0000250" key="1">
    <source>
        <dbReference type="UniProtKB" id="Q8WTV1"/>
    </source>
</evidence>
<evidence type="ECO:0000250" key="2">
    <source>
        <dbReference type="UniProtKB" id="Q8WY91"/>
    </source>
</evidence>
<evidence type="ECO:0000255" key="3">
    <source>
        <dbReference type="PROSITE-ProRule" id="PRU00309"/>
    </source>
</evidence>
<evidence type="ECO:0000256" key="4">
    <source>
        <dbReference type="SAM" id="MobiDB-lite"/>
    </source>
</evidence>
<evidence type="ECO:0000305" key="5"/>
<keyword id="KW-0963">Cytoplasm</keyword>
<keyword id="KW-0238">DNA-binding</keyword>
<keyword id="KW-0349">Heme</keyword>
<keyword id="KW-0408">Iron</keyword>
<keyword id="KW-0413">Isomerase</keyword>
<keyword id="KW-0479">Metal-binding</keyword>
<keyword id="KW-0539">Nucleus</keyword>
<keyword id="KW-0597">Phosphoprotein</keyword>
<keyword id="KW-1185">Reference proteome</keyword>
<keyword id="KW-0862">Zinc</keyword>
<keyword id="KW-0863">Zinc-finger</keyword>
<proteinExistence type="evidence at transcript level"/>
<accession>Q2TBI2</accession>
<sequence>MVICCAAANCSNRQGKGEKRAVSFHRFPLKDSKRLMQWLKAVQRDNWTPTKYSFLCSEHFTKDSFSKRLEDQHRLLKPTAVPSIFHLAEKKRRAGGHGRPRRRDTGKASAGLRAQASDPVDGKAAAGSPSSSSASPMAKPEPRKLKRATPQGRTAARAARETAGQERGRQPLEGRAEDGPASAATSCSQGEAGTGAEDAGEEGATPADRGLVDRSGVSADDFTPPGSGACKFIGSLHSYSFSSKHARERPAVPREPVERKRLRRDAEPGCSGSSPGPEKGPAQSPPRACPSASSSLTATPQKPAQGASAPPTDVTPKPAAEAVQSEHSDASPMSINEVILSASGACKLIDSLHSYCFSSRQSKSQVCCLREQVEKKNGELRTLRQRVSRSDSQVRELRQKLDQLRRLSLPHLSSLLPPGREPPKMSPVVEPLSWMLGTWLSEPPGAGTFPTLQPFRYLEEAHISHVGQPMLNFSFNAFHPDTHKPMHRECGFIRLEPDTNKVAFVSAQNTGIVEVEEGEVNGQELCIASHSIARISFAKEPHVEQITRKFRLNSEGNLEQTVSMATTTQPLTQHLHVTYKKVTP</sequence>
<dbReference type="EC" id="5.99.-.-" evidence="2"/>
<dbReference type="EMBL" id="BC110168">
    <property type="protein sequence ID" value="AAI10169.1"/>
    <property type="status" value="ALT_FRAME"/>
    <property type="molecule type" value="mRNA"/>
</dbReference>
<dbReference type="RefSeq" id="NP_001033758.1">
    <property type="nucleotide sequence ID" value="NM_001038669.1"/>
</dbReference>
<dbReference type="SMR" id="Q2TBI2"/>
<dbReference type="FunCoup" id="Q2TBI2">
    <property type="interactions" value="486"/>
</dbReference>
<dbReference type="STRING" id="9913.ENSBTAP00000017628"/>
<dbReference type="PaxDb" id="9913-ENSBTAP00000017628"/>
<dbReference type="GeneID" id="507503"/>
<dbReference type="KEGG" id="bta:507503"/>
<dbReference type="CTD" id="51078"/>
<dbReference type="eggNOG" id="KOG3371">
    <property type="taxonomic scope" value="Eukaryota"/>
</dbReference>
<dbReference type="InParanoid" id="Q2TBI2"/>
<dbReference type="OrthoDB" id="58529at2759"/>
<dbReference type="Proteomes" id="UP000009136">
    <property type="component" value="Unplaced"/>
</dbReference>
<dbReference type="GO" id="GO:0005737">
    <property type="term" value="C:cytoplasm"/>
    <property type="evidence" value="ECO:0007669"/>
    <property type="project" value="UniProtKB-SubCell"/>
</dbReference>
<dbReference type="GO" id="GO:0005634">
    <property type="term" value="C:nucleus"/>
    <property type="evidence" value="ECO:0007669"/>
    <property type="project" value="UniProtKB-SubCell"/>
</dbReference>
<dbReference type="GO" id="GO:0003677">
    <property type="term" value="F:DNA binding"/>
    <property type="evidence" value="ECO:0007669"/>
    <property type="project" value="UniProtKB-KW"/>
</dbReference>
<dbReference type="GO" id="GO:0070026">
    <property type="term" value="F:nitric oxide binding"/>
    <property type="evidence" value="ECO:0000250"/>
    <property type="project" value="UniProtKB"/>
</dbReference>
<dbReference type="GO" id="GO:0062213">
    <property type="term" value="F:peroxynitrite isomerase activity"/>
    <property type="evidence" value="ECO:0000250"/>
    <property type="project" value="UniProtKB"/>
</dbReference>
<dbReference type="GO" id="GO:0008270">
    <property type="term" value="F:zinc ion binding"/>
    <property type="evidence" value="ECO:0007669"/>
    <property type="project" value="UniProtKB-KW"/>
</dbReference>
<dbReference type="GO" id="GO:0042126">
    <property type="term" value="P:nitrate metabolic process"/>
    <property type="evidence" value="ECO:0000250"/>
    <property type="project" value="UniProtKB"/>
</dbReference>
<dbReference type="GO" id="GO:0006570">
    <property type="term" value="P:tyrosine metabolic process"/>
    <property type="evidence" value="ECO:0000250"/>
    <property type="project" value="UniProtKB"/>
</dbReference>
<dbReference type="CDD" id="cd07828">
    <property type="entry name" value="lipocalin_heme-bd-THAP4-like"/>
    <property type="match status" value="1"/>
</dbReference>
<dbReference type="FunFam" id="2.40.128.20:FF:000014">
    <property type="entry name" value="THAP domain-containing protein 4 isoform X1"/>
    <property type="match status" value="1"/>
</dbReference>
<dbReference type="Gene3D" id="2.40.128.20">
    <property type="match status" value="1"/>
</dbReference>
<dbReference type="Gene3D" id="6.20.210.20">
    <property type="entry name" value="THAP domain"/>
    <property type="match status" value="1"/>
</dbReference>
<dbReference type="InterPro" id="IPR012674">
    <property type="entry name" value="Calycin"/>
</dbReference>
<dbReference type="InterPro" id="IPR045165">
    <property type="entry name" value="Nitrobindin"/>
</dbReference>
<dbReference type="InterPro" id="IPR014878">
    <property type="entry name" value="THAP4-like_heme-bd"/>
</dbReference>
<dbReference type="InterPro" id="IPR006612">
    <property type="entry name" value="THAP_Znf"/>
</dbReference>
<dbReference type="InterPro" id="IPR038441">
    <property type="entry name" value="THAP_Znf_sf"/>
</dbReference>
<dbReference type="PANTHER" id="PTHR15854:SF4">
    <property type="entry name" value="PEROXYNITRITE ISOMERASE THAP4"/>
    <property type="match status" value="1"/>
</dbReference>
<dbReference type="PANTHER" id="PTHR15854">
    <property type="entry name" value="THAP4 PROTEIN"/>
    <property type="match status" value="1"/>
</dbReference>
<dbReference type="Pfam" id="PF05485">
    <property type="entry name" value="THAP"/>
    <property type="match status" value="1"/>
</dbReference>
<dbReference type="Pfam" id="PF08768">
    <property type="entry name" value="THAP4_heme-bd"/>
    <property type="match status" value="1"/>
</dbReference>
<dbReference type="SMART" id="SM00692">
    <property type="entry name" value="DM3"/>
    <property type="match status" value="1"/>
</dbReference>
<dbReference type="SMART" id="SM00980">
    <property type="entry name" value="THAP"/>
    <property type="match status" value="1"/>
</dbReference>
<dbReference type="SUPFAM" id="SSF57716">
    <property type="entry name" value="Glucocorticoid receptor-like (DNA-binding domain)"/>
    <property type="match status" value="1"/>
</dbReference>
<dbReference type="SUPFAM" id="SSF50814">
    <property type="entry name" value="Lipocalins"/>
    <property type="match status" value="1"/>
</dbReference>
<dbReference type="PROSITE" id="PS50950">
    <property type="entry name" value="ZF_THAP"/>
    <property type="match status" value="1"/>
</dbReference>
<name>THAP4_BOVIN</name>
<protein>
    <recommendedName>
        <fullName evidence="5">Peroxynitrite isomerase THAP4</fullName>
        <ecNumber evidence="2">5.99.-.-</ecNumber>
    </recommendedName>
    <alternativeName>
        <fullName evidence="5">Ferric nitrobindin</fullName>
        <shortName evidence="5">Nb(III)</shortName>
    </alternativeName>
    <alternativeName>
        <fullName evidence="2">THAP domain-containing protein 4</fullName>
    </alternativeName>
</protein>
<reference key="1">
    <citation type="submission" date="2005-11" db="EMBL/GenBank/DDBJ databases">
        <authorList>
            <consortium name="NIH - Mammalian Gene Collection (MGC) project"/>
        </authorList>
    </citation>
    <scope>NUCLEOTIDE SEQUENCE [LARGE SCALE MRNA]</scope>
    <source>
        <strain>Crossbred X Angus</strain>
        <tissue>Liver</tissue>
    </source>
</reference>
<comment type="function">
    <text evidence="2">Heme-binding protein able to scavenge peroxynitrite and to protect free L-tyrosine against peroxynitrite-mediated nitration, by acting as a peroxynitrite isomerase that converts peroxynitrite to nitrate. Therefore, this protein likely plays a role in peroxynitrite sensing and in the detoxification of reactive nitrogen and oxygen species (RNS and ROS, respectively). Is able to bind nitric oxide (NO) in vitro, but may act as a sensor of peroxynitrite levels in vivo, possibly modulating the transcriptional activity residing in the N-terminal region.</text>
</comment>
<comment type="catalytic activity">
    <reaction evidence="2">
        <text>peroxynitrite = nitrate</text>
        <dbReference type="Rhea" id="RHEA:63116"/>
        <dbReference type="ChEBI" id="CHEBI:17632"/>
        <dbReference type="ChEBI" id="CHEBI:25941"/>
    </reaction>
    <physiologicalReaction direction="left-to-right" evidence="2">
        <dbReference type="Rhea" id="RHEA:63117"/>
    </physiologicalReaction>
</comment>
<comment type="cofactor">
    <cofactor evidence="2">
        <name>heme b</name>
        <dbReference type="ChEBI" id="CHEBI:60344"/>
    </cofactor>
    <text evidence="2">Binds 1 heme b group per subunit, that coordinates a highly solvent-exposed Fe(III) atom.</text>
</comment>
<comment type="pathway">
    <text evidence="2">Nitrogen metabolism.</text>
</comment>
<comment type="subunit">
    <text evidence="2">Homodimer.</text>
</comment>
<comment type="subcellular location">
    <subcellularLocation>
        <location evidence="2">Cytoplasm</location>
    </subcellularLocation>
    <subcellularLocation>
        <location evidence="2">Nucleus</location>
    </subcellularLocation>
    <text evidence="2">Localizes mainly in the cytoplasm and partially in the nucleus.</text>
</comment>
<comment type="domain">
    <text evidence="2">The C-terminal nitrobindin region coordinates a heme and bears the isomerase activity. The N-terminal zinc finger domain likely binds DNA and may be involved in transcriptional regulation.</text>
</comment>
<comment type="similarity">
    <text evidence="5">In the C-terminal section; belongs to the nitrobindin family.</text>
</comment>
<comment type="sequence caution" evidence="5">
    <conflict type="frameshift">
        <sequence resource="EMBL-CDS" id="AAI10169"/>
    </conflict>
</comment>
<gene>
    <name evidence="2" type="primary">THAP4</name>
</gene>